<organism>
    <name type="scientific">Arabidopsis thaliana</name>
    <name type="common">Mouse-ear cress</name>
    <dbReference type="NCBI Taxonomy" id="3702"/>
    <lineage>
        <taxon>Eukaryota</taxon>
        <taxon>Viridiplantae</taxon>
        <taxon>Streptophyta</taxon>
        <taxon>Embryophyta</taxon>
        <taxon>Tracheophyta</taxon>
        <taxon>Spermatophyta</taxon>
        <taxon>Magnoliopsida</taxon>
        <taxon>eudicotyledons</taxon>
        <taxon>Gunneridae</taxon>
        <taxon>Pentapetalae</taxon>
        <taxon>rosids</taxon>
        <taxon>malvids</taxon>
        <taxon>Brassicales</taxon>
        <taxon>Brassicaceae</taxon>
        <taxon>Camelineae</taxon>
        <taxon>Arabidopsis</taxon>
    </lineage>
</organism>
<proteinExistence type="evidence at protein level"/>
<reference key="1">
    <citation type="journal article" date="1996" name="Plant Cell">
        <title>Functional analysis of the beta and epsilon lycopene cyclase enzymes of Arabidopsis reveals a mechanism for control of cyclic carotenoid formation.</title>
        <authorList>
            <person name="Cunningham F.X. Jr."/>
            <person name="Pogson B."/>
            <person name="Sun Z."/>
            <person name="McDonald K.A."/>
            <person name="Dellapenna D."/>
            <person name="Gantt E."/>
        </authorList>
    </citation>
    <scope>NUCLEOTIDE SEQUENCE [MRNA] (ISOFORM 1)</scope>
    <scope>FUNCTION</scope>
    <scope>CATALYTIC ACTIVITY</scope>
    <source>
        <strain>cv. Columbia</strain>
    </source>
</reference>
<reference key="2">
    <citation type="online journal article" date="1995" name="Plant Gene Register">
        <title>Nucleotide sequence of lycopene cyclase from Arabidopsis.</title>
        <authorList>
            <person name="Scolnik P.A."/>
            <person name="Bartley G.E."/>
        </authorList>
        <locator>PGR95-019</locator>
    </citation>
    <scope>NUCLEOTIDE SEQUENCE [MRNA] (ISOFORM 1)</scope>
    <source>
        <strain>cv. Wassilewskija</strain>
    </source>
</reference>
<reference key="3">
    <citation type="submission" date="1998-12" db="EMBL/GenBank/DDBJ databases">
        <title>Gene structure and regulation of the carotenoid biosynthesis pathway in Arabidopsis thaliana.</title>
        <authorList>
            <person name="Giuliano G."/>
            <person name="Rosati C."/>
            <person name="Santangelo G."/>
        </authorList>
    </citation>
    <scope>NUCLEOTIDE SEQUENCE [GENOMIC DNA]</scope>
</reference>
<reference key="4">
    <citation type="journal article" date="2000" name="Nature">
        <title>Sequence and analysis of chromosome 3 of the plant Arabidopsis thaliana.</title>
        <authorList>
            <person name="Salanoubat M."/>
            <person name="Lemcke K."/>
            <person name="Rieger M."/>
            <person name="Ansorge W."/>
            <person name="Unseld M."/>
            <person name="Fartmann B."/>
            <person name="Valle G."/>
            <person name="Bloecker H."/>
            <person name="Perez-Alonso M."/>
            <person name="Obermaier B."/>
            <person name="Delseny M."/>
            <person name="Boutry M."/>
            <person name="Grivell L.A."/>
            <person name="Mache R."/>
            <person name="Puigdomenech P."/>
            <person name="De Simone V."/>
            <person name="Choisne N."/>
            <person name="Artiguenave F."/>
            <person name="Robert C."/>
            <person name="Brottier P."/>
            <person name="Wincker P."/>
            <person name="Cattolico L."/>
            <person name="Weissenbach J."/>
            <person name="Saurin W."/>
            <person name="Quetier F."/>
            <person name="Schaefer M."/>
            <person name="Mueller-Auer S."/>
            <person name="Gabel C."/>
            <person name="Fuchs M."/>
            <person name="Benes V."/>
            <person name="Wurmbach E."/>
            <person name="Drzonek H."/>
            <person name="Erfle H."/>
            <person name="Jordan N."/>
            <person name="Bangert S."/>
            <person name="Wiedelmann R."/>
            <person name="Kranz H."/>
            <person name="Voss H."/>
            <person name="Holland R."/>
            <person name="Brandt P."/>
            <person name="Nyakatura G."/>
            <person name="Vezzi A."/>
            <person name="D'Angelo M."/>
            <person name="Pallavicini A."/>
            <person name="Toppo S."/>
            <person name="Simionati B."/>
            <person name="Conrad A."/>
            <person name="Hornischer K."/>
            <person name="Kauer G."/>
            <person name="Loehnert T.-H."/>
            <person name="Nordsiek G."/>
            <person name="Reichelt J."/>
            <person name="Scharfe M."/>
            <person name="Schoen O."/>
            <person name="Bargues M."/>
            <person name="Terol J."/>
            <person name="Climent J."/>
            <person name="Navarro P."/>
            <person name="Collado C."/>
            <person name="Perez-Perez A."/>
            <person name="Ottenwaelder B."/>
            <person name="Duchemin D."/>
            <person name="Cooke R."/>
            <person name="Laudie M."/>
            <person name="Berger-Llauro C."/>
            <person name="Purnelle B."/>
            <person name="Masuy D."/>
            <person name="de Haan M."/>
            <person name="Maarse A.C."/>
            <person name="Alcaraz J.-P."/>
            <person name="Cottet A."/>
            <person name="Casacuberta E."/>
            <person name="Monfort A."/>
            <person name="Argiriou A."/>
            <person name="Flores M."/>
            <person name="Liguori R."/>
            <person name="Vitale D."/>
            <person name="Mannhaupt G."/>
            <person name="Haase D."/>
            <person name="Schoof H."/>
            <person name="Rudd S."/>
            <person name="Zaccaria P."/>
            <person name="Mewes H.-W."/>
            <person name="Mayer K.F.X."/>
            <person name="Kaul S."/>
            <person name="Town C.D."/>
            <person name="Koo H.L."/>
            <person name="Tallon L.J."/>
            <person name="Jenkins J."/>
            <person name="Rooney T."/>
            <person name="Rizzo M."/>
            <person name="Walts A."/>
            <person name="Utterback T."/>
            <person name="Fujii C.Y."/>
            <person name="Shea T.P."/>
            <person name="Creasy T.H."/>
            <person name="Haas B."/>
            <person name="Maiti R."/>
            <person name="Wu D."/>
            <person name="Peterson J."/>
            <person name="Van Aken S."/>
            <person name="Pai G."/>
            <person name="Militscher J."/>
            <person name="Sellers P."/>
            <person name="Gill J.E."/>
            <person name="Feldblyum T.V."/>
            <person name="Preuss D."/>
            <person name="Lin X."/>
            <person name="Nierman W.C."/>
            <person name="Salzberg S.L."/>
            <person name="White O."/>
            <person name="Venter J.C."/>
            <person name="Fraser C.M."/>
            <person name="Kaneko T."/>
            <person name="Nakamura Y."/>
            <person name="Sato S."/>
            <person name="Kato T."/>
            <person name="Asamizu E."/>
            <person name="Sasamoto S."/>
            <person name="Kimura T."/>
            <person name="Idesawa K."/>
            <person name="Kawashima K."/>
            <person name="Kishida Y."/>
            <person name="Kiyokawa C."/>
            <person name="Kohara M."/>
            <person name="Matsumoto M."/>
            <person name="Matsuno A."/>
            <person name="Muraki A."/>
            <person name="Nakayama S."/>
            <person name="Nakazaki N."/>
            <person name="Shinpo S."/>
            <person name="Takeuchi C."/>
            <person name="Wada T."/>
            <person name="Watanabe A."/>
            <person name="Yamada M."/>
            <person name="Yasuda M."/>
            <person name="Tabata S."/>
        </authorList>
    </citation>
    <scope>NUCLEOTIDE SEQUENCE [LARGE SCALE GENOMIC DNA]</scope>
    <source>
        <strain>cv. Columbia</strain>
    </source>
</reference>
<reference key="5">
    <citation type="journal article" date="2017" name="Plant J.">
        <title>Araport11: a complete reannotation of the Arabidopsis thaliana reference genome.</title>
        <authorList>
            <person name="Cheng C.Y."/>
            <person name="Krishnakumar V."/>
            <person name="Chan A.P."/>
            <person name="Thibaud-Nissen F."/>
            <person name="Schobel S."/>
            <person name="Town C.D."/>
        </authorList>
    </citation>
    <scope>GENOME REANNOTATION</scope>
    <source>
        <strain>cv. Columbia</strain>
    </source>
</reference>
<reference key="6">
    <citation type="journal article" date="2003" name="Science">
        <title>Empirical analysis of transcriptional activity in the Arabidopsis genome.</title>
        <authorList>
            <person name="Yamada K."/>
            <person name="Lim J."/>
            <person name="Dale J.M."/>
            <person name="Chen H."/>
            <person name="Shinn P."/>
            <person name="Palm C.J."/>
            <person name="Southwick A.M."/>
            <person name="Wu H.C."/>
            <person name="Kim C.J."/>
            <person name="Nguyen M."/>
            <person name="Pham P.K."/>
            <person name="Cheuk R.F."/>
            <person name="Karlin-Newmann G."/>
            <person name="Liu S.X."/>
            <person name="Lam B."/>
            <person name="Sakano H."/>
            <person name="Wu T."/>
            <person name="Yu G."/>
            <person name="Miranda M."/>
            <person name="Quach H.L."/>
            <person name="Tripp M."/>
            <person name="Chang C.H."/>
            <person name="Lee J.M."/>
            <person name="Toriumi M.J."/>
            <person name="Chan M.M."/>
            <person name="Tang C.C."/>
            <person name="Onodera C.S."/>
            <person name="Deng J.M."/>
            <person name="Akiyama K."/>
            <person name="Ansari Y."/>
            <person name="Arakawa T."/>
            <person name="Banh J."/>
            <person name="Banno F."/>
            <person name="Bowser L."/>
            <person name="Brooks S.Y."/>
            <person name="Carninci P."/>
            <person name="Chao Q."/>
            <person name="Choy N."/>
            <person name="Enju A."/>
            <person name="Goldsmith A.D."/>
            <person name="Gurjal M."/>
            <person name="Hansen N.F."/>
            <person name="Hayashizaki Y."/>
            <person name="Johnson-Hopson C."/>
            <person name="Hsuan V.W."/>
            <person name="Iida K."/>
            <person name="Karnes M."/>
            <person name="Khan S."/>
            <person name="Koesema E."/>
            <person name="Ishida J."/>
            <person name="Jiang P.X."/>
            <person name="Jones T."/>
            <person name="Kawai J."/>
            <person name="Kamiya A."/>
            <person name="Meyers C."/>
            <person name="Nakajima M."/>
            <person name="Narusaka M."/>
            <person name="Seki M."/>
            <person name="Sakurai T."/>
            <person name="Satou M."/>
            <person name="Tamse R."/>
            <person name="Vaysberg M."/>
            <person name="Wallender E.K."/>
            <person name="Wong C."/>
            <person name="Yamamura Y."/>
            <person name="Yuan S."/>
            <person name="Shinozaki K."/>
            <person name="Davis R.W."/>
            <person name="Theologis A."/>
            <person name="Ecker J.R."/>
        </authorList>
    </citation>
    <scope>NUCLEOTIDE SEQUENCE [LARGE SCALE MRNA] (ISOFORM 1)</scope>
    <source>
        <strain>cv. Columbia</strain>
    </source>
</reference>
<reference key="7">
    <citation type="journal article" date="2009" name="Plant Cell">
        <title>Lutein accumulation in the absence of zeaxanthin restores nonphotochemical quenching in the Arabidopsis thaliana npq1 mutant.</title>
        <authorList>
            <person name="Li Z."/>
            <person name="Ahn T.K."/>
            <person name="Avenson T.J."/>
            <person name="Ballottari M."/>
            <person name="Cruz J.A."/>
            <person name="Kramer D.M."/>
            <person name="Bassi R."/>
            <person name="Fleming G.R."/>
            <person name="Keasling J.D."/>
            <person name="Niyogi K.K."/>
        </authorList>
    </citation>
    <scope>FUNCTION</scope>
    <scope>MUTAGENESIS OF GLY-451</scope>
</reference>
<reference key="8">
    <citation type="journal article" date="2011" name="Plant Cell Physiol.">
        <title>Transformation of beta-lycopene cyclase genes from Salicornia europaea and Arabidopsis conferred salt tolerance in Arabidopsis and tobacco.</title>
        <authorList>
            <person name="Chen X."/>
            <person name="Han H."/>
            <person name="Jiang P."/>
            <person name="Nie L."/>
            <person name="Bao H."/>
            <person name="Fan P."/>
            <person name="Lv S."/>
            <person name="Feng J."/>
            <person name="Li Y."/>
        </authorList>
    </citation>
    <scope>FUNCTION</scope>
</reference>
<reference key="9">
    <citation type="journal article" date="2012" name="Mol. Cell. Proteomics">
        <title>Comparative large-scale characterisation of plant vs. mammal proteins reveals similar and idiosyncratic N-alpha acetylation features.</title>
        <authorList>
            <person name="Bienvenut W.V."/>
            <person name="Sumpton D."/>
            <person name="Martinez A."/>
            <person name="Lilla S."/>
            <person name="Espagne C."/>
            <person name="Meinnel T."/>
            <person name="Giglione C."/>
        </authorList>
    </citation>
    <scope>ACETYLATION [LARGE SCALE ANALYSIS] AT VAL-49</scope>
    <scope>CLEAVAGE OF TRANSIT PEPTIDE [LARGE SCALE ANALYSIS] AFTER SER-48</scope>
    <scope>IDENTIFICATION BY MASS SPECTROMETRY [LARGE SCALE ANALYSIS]</scope>
</reference>
<keyword id="KW-0007">Acetylation</keyword>
<keyword id="KW-0025">Alternative splicing</keyword>
<keyword id="KW-0125">Carotenoid biosynthesis</keyword>
<keyword id="KW-0150">Chloroplast</keyword>
<keyword id="KW-0413">Isomerase</keyword>
<keyword id="KW-0520">NAD</keyword>
<keyword id="KW-0934">Plastid</keyword>
<keyword id="KW-1185">Reference proteome</keyword>
<keyword id="KW-0346">Stress response</keyword>
<keyword id="KW-0809">Transit peptide</keyword>
<gene>
    <name evidence="6" type="primary">LCY1</name>
    <name evidence="5" type="synonym">LCYB</name>
    <name evidence="8" type="synonym">LYC</name>
    <name evidence="5" type="synonym">SZL1</name>
    <name evidence="10" type="ordered locus">At3g10230</name>
    <name evidence="11" type="ORF">F14P13.17</name>
</gene>
<sequence length="501" mass="56177">MDTLLKTPNKLDFFIPQFHGFERLCSNNPYHSRVRLGVKKRAIKIVSSVVSGSAALLDLVPETKKENLDFELPLYDTSKSQVVDLAIVGGGPAGLAVAQQVSEAGLSVCSIDPSPKLIWPNNYGVWVDEFEAMDLLDCLDTTWSGAVVYVDEGVKKDLSRPYGRVNRKQLKSKMLQKCITNGVKFHQSKVTNVVHEEANSTVVCSDGVKIQASVVLDATGFSRCLVQYDKPYNPGYQVAYGIVAEVDGHPFDVDKMVFMDWRDKHLDSYPELKERNSKIPTFLYAMPFSSNRIFLEETSLVARPGLRMEDIQERMAARLKHLGINVKRIEEDERCVIPMGGPLPVLPQRVVGIGGTAGMVHPSTGYMVARTLAAAPIVANAIVRYLGSPSSNSLRGDQLSAEVWRDLWPIERRRQREFFCFGMDILLKLDLDATRRFFDAFFDLQPHYWHGFLSSRLFLPELLVFGLSLFSHASNTSRLEIMTKGTVPLAKMINNLVQDRD</sequence>
<accession>Q38933</accession>
<accession>A8MR53</accession>
<accession>Q39145</accession>
<evidence type="ECO:0000255" key="1"/>
<evidence type="ECO:0000269" key="2">
    <source>
    </source>
</evidence>
<evidence type="ECO:0000269" key="3">
    <source>
    </source>
</evidence>
<evidence type="ECO:0000269" key="4">
    <source>
    </source>
</evidence>
<evidence type="ECO:0000303" key="5">
    <source>
    </source>
</evidence>
<evidence type="ECO:0000303" key="6">
    <source>
    </source>
</evidence>
<evidence type="ECO:0000303" key="7">
    <source>
    </source>
</evidence>
<evidence type="ECO:0000303" key="8">
    <source ref="2"/>
</evidence>
<evidence type="ECO:0000305" key="9"/>
<evidence type="ECO:0000312" key="10">
    <source>
        <dbReference type="Araport" id="AT3G10230"/>
    </source>
</evidence>
<evidence type="ECO:0000312" key="11">
    <source>
        <dbReference type="EMBL" id="AAF02819.1"/>
    </source>
</evidence>
<evidence type="ECO:0007744" key="12">
    <source>
    </source>
</evidence>
<dbReference type="EC" id="5.5.1.19" evidence="4"/>
<dbReference type="EMBL" id="U50739">
    <property type="protein sequence ID" value="AAB53337.1"/>
    <property type="molecule type" value="mRNA"/>
</dbReference>
<dbReference type="EMBL" id="L40176">
    <property type="protein sequence ID" value="AAA81880.1"/>
    <property type="molecule type" value="mRNA"/>
</dbReference>
<dbReference type="EMBL" id="AF117256">
    <property type="protein sequence ID" value="AAF82388.1"/>
    <property type="molecule type" value="Genomic_DNA"/>
</dbReference>
<dbReference type="EMBL" id="AC009400">
    <property type="protein sequence ID" value="AAF02819.1"/>
    <property type="molecule type" value="Genomic_DNA"/>
</dbReference>
<dbReference type="EMBL" id="CP002686">
    <property type="protein sequence ID" value="AEE74874.1"/>
    <property type="molecule type" value="Genomic_DNA"/>
</dbReference>
<dbReference type="EMBL" id="CP002686">
    <property type="protein sequence ID" value="AEE74875.1"/>
    <property type="molecule type" value="Genomic_DNA"/>
</dbReference>
<dbReference type="EMBL" id="AY059749">
    <property type="protein sequence ID" value="AAL24097.1"/>
    <property type="molecule type" value="mRNA"/>
</dbReference>
<dbReference type="EMBL" id="AY091396">
    <property type="protein sequence ID" value="AAM14335.1"/>
    <property type="molecule type" value="mRNA"/>
</dbReference>
<dbReference type="RefSeq" id="NP_001078131.1">
    <molecule id="Q38933-2"/>
    <property type="nucleotide sequence ID" value="NM_001084662.1"/>
</dbReference>
<dbReference type="RefSeq" id="NP_187634.1">
    <molecule id="Q38933-1"/>
    <property type="nucleotide sequence ID" value="NM_111858.2"/>
</dbReference>
<dbReference type="SMR" id="Q38933"/>
<dbReference type="FunCoup" id="Q38933">
    <property type="interactions" value="867"/>
</dbReference>
<dbReference type="STRING" id="3702.Q38933"/>
<dbReference type="GlyGen" id="Q38933">
    <property type="glycosylation" value="1 site"/>
</dbReference>
<dbReference type="iPTMnet" id="Q38933"/>
<dbReference type="PaxDb" id="3702-AT3G10230.1"/>
<dbReference type="ProteomicsDB" id="250738">
    <molecule id="Q38933-1"/>
</dbReference>
<dbReference type="EnsemblPlants" id="AT3G10230.1">
    <molecule id="Q38933-1"/>
    <property type="protein sequence ID" value="AT3G10230.1"/>
    <property type="gene ID" value="AT3G10230"/>
</dbReference>
<dbReference type="EnsemblPlants" id="AT3G10230.2">
    <molecule id="Q38933-2"/>
    <property type="protein sequence ID" value="AT3G10230.2"/>
    <property type="gene ID" value="AT3G10230"/>
</dbReference>
<dbReference type="GeneID" id="820185"/>
<dbReference type="Gramene" id="AT3G10230.1">
    <molecule id="Q38933-1"/>
    <property type="protein sequence ID" value="AT3G10230.1"/>
    <property type="gene ID" value="AT3G10230"/>
</dbReference>
<dbReference type="Gramene" id="AT3G10230.2">
    <molecule id="Q38933-2"/>
    <property type="protein sequence ID" value="AT3G10230.2"/>
    <property type="gene ID" value="AT3G10230"/>
</dbReference>
<dbReference type="KEGG" id="ath:AT3G10230"/>
<dbReference type="Araport" id="AT3G10230"/>
<dbReference type="TAIR" id="AT3G10230">
    <property type="gene designation" value="LYC"/>
</dbReference>
<dbReference type="eggNOG" id="ENOG502QT2F">
    <property type="taxonomic scope" value="Eukaryota"/>
</dbReference>
<dbReference type="InParanoid" id="Q38933"/>
<dbReference type="OMA" id="FVLMDFR"/>
<dbReference type="PhylomeDB" id="Q38933"/>
<dbReference type="BioCyc" id="ARA:AT3G10230-MONOMER"/>
<dbReference type="BioCyc" id="MetaCyc:AT3G10230-MONOMER"/>
<dbReference type="UniPathway" id="UPA00802"/>
<dbReference type="UniPathway" id="UPA00805"/>
<dbReference type="PRO" id="PR:Q38933"/>
<dbReference type="Proteomes" id="UP000006548">
    <property type="component" value="Chromosome 3"/>
</dbReference>
<dbReference type="ExpressionAtlas" id="Q38933">
    <property type="expression patterns" value="baseline and differential"/>
</dbReference>
<dbReference type="GO" id="GO:0009507">
    <property type="term" value="C:chloroplast"/>
    <property type="evidence" value="ECO:0007669"/>
    <property type="project" value="UniProtKB-SubCell"/>
</dbReference>
<dbReference type="GO" id="GO:0045436">
    <property type="term" value="F:lycopene beta cyclase activity"/>
    <property type="evidence" value="ECO:0000314"/>
    <property type="project" value="UniProtKB"/>
</dbReference>
<dbReference type="GO" id="GO:0016705">
    <property type="term" value="F:oxidoreductase activity, acting on paired donors, with incorporation or reduction of molecular oxygen"/>
    <property type="evidence" value="ECO:0007669"/>
    <property type="project" value="InterPro"/>
</dbReference>
<dbReference type="GO" id="GO:0016117">
    <property type="term" value="P:carotenoid biosynthetic process"/>
    <property type="evidence" value="ECO:0000314"/>
    <property type="project" value="UniProtKB"/>
</dbReference>
<dbReference type="FunFam" id="3.50.50.60:FF:000101">
    <property type="entry name" value="lycopene epsilon cyclase, chloroplastic"/>
    <property type="match status" value="1"/>
</dbReference>
<dbReference type="Gene3D" id="3.50.50.60">
    <property type="entry name" value="FAD/NAD(P)-binding domain"/>
    <property type="match status" value="1"/>
</dbReference>
<dbReference type="InterPro" id="IPR036188">
    <property type="entry name" value="FAD/NAD-bd_sf"/>
</dbReference>
<dbReference type="InterPro" id="IPR010108">
    <property type="entry name" value="Lycopene_cyclase_b/e"/>
</dbReference>
<dbReference type="NCBIfam" id="TIGR01790">
    <property type="entry name" value="carotene-cycl"/>
    <property type="match status" value="1"/>
</dbReference>
<dbReference type="PANTHER" id="PTHR39757">
    <property type="match status" value="1"/>
</dbReference>
<dbReference type="PANTHER" id="PTHR39757:SF5">
    <property type="entry name" value="OS02G0190600 PROTEIN"/>
    <property type="match status" value="1"/>
</dbReference>
<dbReference type="Pfam" id="PF05834">
    <property type="entry name" value="Lycopene_cycl"/>
    <property type="match status" value="1"/>
</dbReference>
<dbReference type="SUPFAM" id="SSF51905">
    <property type="entry name" value="FAD/NAD(P)-binding domain"/>
    <property type="match status" value="1"/>
</dbReference>
<comment type="function">
    <text evidence="2 3 4">Involved in carotenoid biosynthesis. Catalyzes the double cyclization reaction which converts lycopene to beta-carotene and neurosporene to beta-zeacarotene (PubMed:8837512). Major lycopene beta-cyclase that does not seem to be involved in neoxanthin synthesis (PubMed:19549928). Involved in salt tolerance improvement by increasing synthesis of carotenoids, which impairs reactive oxygen species (ROS) and protects the photosynthetic system under salt stress (PubMed:21471119).</text>
</comment>
<comment type="catalytic activity">
    <reaction evidence="4">
        <text>a carotenoid psi-end group = a carotenoid beta-end derivative</text>
        <dbReference type="Rhea" id="RHEA:55620"/>
        <dbReference type="ChEBI" id="CHEBI:139114"/>
        <dbReference type="ChEBI" id="CHEBI:139120"/>
        <dbReference type="EC" id="5.5.1.19"/>
    </reaction>
</comment>
<comment type="pathway">
    <text evidence="9">Carotenoid biosynthesis; beta-carotene biosynthesis.</text>
</comment>
<comment type="pathway">
    <text evidence="9">Carotenoid biosynthesis; beta-zeacarotene biosynthesis.</text>
</comment>
<comment type="subcellular location">
    <subcellularLocation>
        <location evidence="1">Plastid</location>
        <location evidence="1">Chloroplast</location>
    </subcellularLocation>
</comment>
<comment type="alternative products">
    <event type="alternative splicing"/>
    <isoform>
        <id>Q38933-1</id>
        <name>1</name>
        <sequence type="displayed"/>
    </isoform>
    <isoform>
        <id>Q38933-2</id>
        <name>2</name>
        <sequence type="described" ref="VSP_035546"/>
    </isoform>
</comment>
<comment type="miscellaneous">
    <text evidence="3">Plants overexpressing LYC1 exhibit improved tolerance to salt stress.</text>
</comment>
<comment type="similarity">
    <text evidence="9">Belongs to the lycopene cyclase family.</text>
</comment>
<protein>
    <recommendedName>
        <fullName evidence="7">Lycopene beta cyclase, chloroplastic</fullName>
        <ecNumber evidence="4">5.5.1.19</ecNumber>
    </recommendedName>
    <alternativeName>
        <fullName evidence="6">AtLCY</fullName>
    </alternativeName>
    <alternativeName>
        <fullName evidence="5">Protein SUPPRESSOR OF ZEAXANTHIN-LESS 1</fullName>
    </alternativeName>
</protein>
<name>LCYB_ARATH</name>
<feature type="transit peptide" description="Chloroplast" evidence="12">
    <location>
        <begin position="1"/>
        <end position="48"/>
    </location>
</feature>
<feature type="chain" id="PRO_0000018429" description="Lycopene beta cyclase, chloroplastic">
    <location>
        <begin position="49"/>
        <end position="501"/>
    </location>
</feature>
<feature type="binding site" evidence="1">
    <location>
        <begin position="85"/>
        <end position="113"/>
    </location>
    <ligand>
        <name>NAD(+)</name>
        <dbReference type="ChEBI" id="CHEBI:57540"/>
    </ligand>
</feature>
<feature type="modified residue" description="N-acetylvaline" evidence="12">
    <location>
        <position position="49"/>
    </location>
</feature>
<feature type="splice variant" id="VSP_035546" description="In isoform 2." evidence="9">
    <location>
        <begin position="1"/>
        <end position="132"/>
    </location>
</feature>
<feature type="mutagenesis site" description="In szl1; slight reduction in plant growth, increased content of lutein, and decreased content of xanthophyll pigments (violaxanthin, antheraxanthin and zeaxanthin)." evidence="2">
    <original>G</original>
    <variation>E</variation>
    <location>
        <position position="451"/>
    </location>
</feature>
<feature type="sequence conflict" description="In Ref. 2; AAA81880." evidence="9" ref="2">
    <original>H</original>
    <variation>P</variation>
    <location>
        <position position="31"/>
    </location>
</feature>
<feature type="sequence conflict" description="In Ref. 2; AAA81880." evidence="9" ref="2">
    <original>V</original>
    <variation>I</variation>
    <location>
        <position position="243"/>
    </location>
</feature>